<dbReference type="EC" id="3.1.26.-"/>
<dbReference type="EMBL" id="EU009924">
    <property type="protein sequence ID" value="ABS32306.1"/>
    <property type="molecule type" value="mRNA"/>
</dbReference>
<dbReference type="EMBL" id="AB353922">
    <property type="protein sequence ID" value="BAF80150.1"/>
    <property type="molecule type" value="mRNA"/>
</dbReference>
<dbReference type="EMBL" id="AL606607">
    <property type="protein sequence ID" value="CAE03362.1"/>
    <property type="status" value="ALT_SEQ"/>
    <property type="molecule type" value="Genomic_DNA"/>
</dbReference>
<dbReference type="EMBL" id="AP008210">
    <property type="protein sequence ID" value="BAF15192.1"/>
    <property type="status" value="ALT_SEQ"/>
    <property type="molecule type" value="Genomic_DNA"/>
</dbReference>
<dbReference type="EMBL" id="AP014960">
    <property type="protein sequence ID" value="BAS90022.1"/>
    <property type="molecule type" value="Genomic_DNA"/>
</dbReference>
<dbReference type="EMBL" id="AP014960">
    <property type="protein sequence ID" value="BAS90023.1"/>
    <property type="molecule type" value="Genomic_DNA"/>
</dbReference>
<dbReference type="EMBL" id="AK066586">
    <property type="protein sequence ID" value="BAG90040.1"/>
    <property type="status" value="ALT_INIT"/>
    <property type="molecule type" value="mRNA"/>
</dbReference>
<dbReference type="RefSeq" id="XP_015636293.1">
    <property type="nucleotide sequence ID" value="XM_015780807.1"/>
</dbReference>
<dbReference type="SMR" id="A7LFZ6"/>
<dbReference type="FunCoup" id="A7LFZ6">
    <property type="interactions" value="2025"/>
</dbReference>
<dbReference type="STRING" id="39947.A7LFZ6"/>
<dbReference type="PaxDb" id="39947-A7LFZ6"/>
<dbReference type="EnsemblPlants" id="Os04t0509300-02">
    <molecule id="A7LFZ6-1"/>
    <property type="protein sequence ID" value="Os04t0509300-02"/>
    <property type="gene ID" value="Os04g0509300"/>
</dbReference>
<dbReference type="Gramene" id="Os04t0509300-02">
    <molecule id="A7LFZ6-1"/>
    <property type="protein sequence ID" value="Os04t0509300-02"/>
    <property type="gene ID" value="Os04g0509300"/>
</dbReference>
<dbReference type="KEGG" id="dosa:Os04g0509300"/>
<dbReference type="eggNOG" id="KOG0701">
    <property type="taxonomic scope" value="Eukaryota"/>
</dbReference>
<dbReference type="HOGENOM" id="CLU_000907_4_5_1"/>
<dbReference type="InParanoid" id="A7LFZ6"/>
<dbReference type="OrthoDB" id="6513042at2759"/>
<dbReference type="Proteomes" id="UP000000763">
    <property type="component" value="Chromosome 4"/>
</dbReference>
<dbReference type="Proteomes" id="UP000059680">
    <property type="component" value="Chromosome 4"/>
</dbReference>
<dbReference type="GO" id="GO:0005737">
    <property type="term" value="C:cytoplasm"/>
    <property type="evidence" value="ECO:0000318"/>
    <property type="project" value="GO_Central"/>
</dbReference>
<dbReference type="GO" id="GO:0036464">
    <property type="term" value="C:cytoplasmic ribonucleoprotein granule"/>
    <property type="evidence" value="ECO:0007669"/>
    <property type="project" value="EnsemblPlants"/>
</dbReference>
<dbReference type="GO" id="GO:0005634">
    <property type="term" value="C:nucleus"/>
    <property type="evidence" value="ECO:0000318"/>
    <property type="project" value="GO_Central"/>
</dbReference>
<dbReference type="GO" id="GO:0005524">
    <property type="term" value="F:ATP binding"/>
    <property type="evidence" value="ECO:0007669"/>
    <property type="project" value="UniProtKB-KW"/>
</dbReference>
<dbReference type="GO" id="GO:0004386">
    <property type="term" value="F:helicase activity"/>
    <property type="evidence" value="ECO:0007669"/>
    <property type="project" value="UniProtKB-KW"/>
</dbReference>
<dbReference type="GO" id="GO:0046872">
    <property type="term" value="F:metal ion binding"/>
    <property type="evidence" value="ECO:0007669"/>
    <property type="project" value="UniProtKB-KW"/>
</dbReference>
<dbReference type="GO" id="GO:0004525">
    <property type="term" value="F:ribonuclease III activity"/>
    <property type="evidence" value="ECO:0000318"/>
    <property type="project" value="GO_Central"/>
</dbReference>
<dbReference type="GO" id="GO:0003723">
    <property type="term" value="F:RNA binding"/>
    <property type="evidence" value="ECO:0000318"/>
    <property type="project" value="GO_Central"/>
</dbReference>
<dbReference type="GO" id="GO:0006353">
    <property type="term" value="P:DNA-templated transcription termination"/>
    <property type="evidence" value="ECO:0007669"/>
    <property type="project" value="EnsemblPlants"/>
</dbReference>
<dbReference type="GO" id="GO:0010599">
    <property type="term" value="P:lsiRNA processing"/>
    <property type="evidence" value="ECO:0007669"/>
    <property type="project" value="EnsemblPlants"/>
</dbReference>
<dbReference type="GO" id="GO:0010492">
    <property type="term" value="P:maintenance of shoot apical meristem identity"/>
    <property type="evidence" value="ECO:0000315"/>
    <property type="project" value="UniProtKB"/>
</dbReference>
<dbReference type="GO" id="GO:0009944">
    <property type="term" value="P:polarity specification of adaxial/abaxial axis"/>
    <property type="evidence" value="ECO:0000315"/>
    <property type="project" value="UniProtKB"/>
</dbReference>
<dbReference type="GO" id="GO:0048608">
    <property type="term" value="P:reproductive structure development"/>
    <property type="evidence" value="ECO:0000315"/>
    <property type="project" value="UniProtKB"/>
</dbReference>
<dbReference type="GO" id="GO:0051214">
    <property type="term" value="P:RNAi-mediated antiviral immunity against RNA virus"/>
    <property type="evidence" value="ECO:0007669"/>
    <property type="project" value="EnsemblPlants"/>
</dbReference>
<dbReference type="GO" id="GO:0030422">
    <property type="term" value="P:siRNA processing"/>
    <property type="evidence" value="ECO:0000318"/>
    <property type="project" value="GO_Central"/>
</dbReference>
<dbReference type="GO" id="GO:0010267">
    <property type="term" value="P:ta-siRNA processing"/>
    <property type="evidence" value="ECO:0000314"/>
    <property type="project" value="UniProtKB"/>
</dbReference>
<dbReference type="GO" id="GO:0010050">
    <property type="term" value="P:vegetative phase change"/>
    <property type="evidence" value="ECO:0007669"/>
    <property type="project" value="EnsemblPlants"/>
</dbReference>
<dbReference type="CDD" id="cd18034">
    <property type="entry name" value="DEXHc_dicer"/>
    <property type="match status" value="1"/>
</dbReference>
<dbReference type="CDD" id="cd00593">
    <property type="entry name" value="RIBOc"/>
    <property type="match status" value="2"/>
</dbReference>
<dbReference type="FunFam" id="2.170.260.10:FF:000006">
    <property type="entry name" value="Dicer-like 103"/>
    <property type="match status" value="1"/>
</dbReference>
<dbReference type="FunFam" id="3.30.160.20:FF:000063">
    <property type="entry name" value="Dicer-like 103"/>
    <property type="match status" value="1"/>
</dbReference>
<dbReference type="FunFam" id="1.10.1520.10:FF:000008">
    <property type="entry name" value="Dicer-like 104"/>
    <property type="match status" value="1"/>
</dbReference>
<dbReference type="FunFam" id="1.10.1520.10:FF:000004">
    <property type="entry name" value="Endoribonuclease dicer-like 1"/>
    <property type="match status" value="1"/>
</dbReference>
<dbReference type="FunFam" id="3.30.160.380:FF:000001">
    <property type="entry name" value="Endoribonuclease dicer-like 1"/>
    <property type="match status" value="1"/>
</dbReference>
<dbReference type="FunFam" id="3.40.50.300:FF:000420">
    <property type="entry name" value="Endoribonuclease dicer-like 1"/>
    <property type="match status" value="1"/>
</dbReference>
<dbReference type="Gene3D" id="3.30.160.20">
    <property type="match status" value="1"/>
</dbReference>
<dbReference type="Gene3D" id="3.30.160.380">
    <property type="entry name" value="Dicer dimerisation domain"/>
    <property type="match status" value="1"/>
</dbReference>
<dbReference type="Gene3D" id="3.40.50.300">
    <property type="entry name" value="P-loop containing nucleotide triphosphate hydrolases"/>
    <property type="match status" value="2"/>
</dbReference>
<dbReference type="Gene3D" id="2.170.260.10">
    <property type="entry name" value="paz domain"/>
    <property type="match status" value="1"/>
</dbReference>
<dbReference type="Gene3D" id="1.10.1520.10">
    <property type="entry name" value="Ribonuclease III domain"/>
    <property type="match status" value="2"/>
</dbReference>
<dbReference type="InterPro" id="IPR011545">
    <property type="entry name" value="DEAD/DEAH_box_helicase_dom"/>
</dbReference>
<dbReference type="InterPro" id="IPR038248">
    <property type="entry name" value="Dicer_dimer_sf"/>
</dbReference>
<dbReference type="InterPro" id="IPR005034">
    <property type="entry name" value="Dicer_dimerisation_dom"/>
</dbReference>
<dbReference type="InterPro" id="IPR014720">
    <property type="entry name" value="dsRBD_dom"/>
</dbReference>
<dbReference type="InterPro" id="IPR014001">
    <property type="entry name" value="Helicase_ATP-bd"/>
</dbReference>
<dbReference type="InterPro" id="IPR001650">
    <property type="entry name" value="Helicase_C-like"/>
</dbReference>
<dbReference type="InterPro" id="IPR027417">
    <property type="entry name" value="P-loop_NTPase"/>
</dbReference>
<dbReference type="InterPro" id="IPR003100">
    <property type="entry name" value="PAZ_dom"/>
</dbReference>
<dbReference type="InterPro" id="IPR036085">
    <property type="entry name" value="PAZ_dom_sf"/>
</dbReference>
<dbReference type="InterPro" id="IPR000999">
    <property type="entry name" value="RNase_III_dom"/>
</dbReference>
<dbReference type="InterPro" id="IPR036389">
    <property type="entry name" value="RNase_III_sf"/>
</dbReference>
<dbReference type="PANTHER" id="PTHR14950:SF15">
    <property type="entry name" value="DICER-LIKE PROTEIN 4"/>
    <property type="match status" value="1"/>
</dbReference>
<dbReference type="PANTHER" id="PTHR14950">
    <property type="entry name" value="DICER-RELATED"/>
    <property type="match status" value="1"/>
</dbReference>
<dbReference type="Pfam" id="PF00270">
    <property type="entry name" value="DEAD"/>
    <property type="match status" value="1"/>
</dbReference>
<dbReference type="Pfam" id="PF03368">
    <property type="entry name" value="Dicer_dimer"/>
    <property type="match status" value="1"/>
</dbReference>
<dbReference type="Pfam" id="PF14709">
    <property type="entry name" value="DND1_DSRM"/>
    <property type="match status" value="1"/>
</dbReference>
<dbReference type="Pfam" id="PF00271">
    <property type="entry name" value="Helicase_C"/>
    <property type="match status" value="1"/>
</dbReference>
<dbReference type="Pfam" id="PF02170">
    <property type="entry name" value="PAZ"/>
    <property type="match status" value="1"/>
</dbReference>
<dbReference type="Pfam" id="PF00636">
    <property type="entry name" value="Ribonuclease_3"/>
    <property type="match status" value="2"/>
</dbReference>
<dbReference type="SMART" id="SM00487">
    <property type="entry name" value="DEXDc"/>
    <property type="match status" value="1"/>
</dbReference>
<dbReference type="SMART" id="SM00358">
    <property type="entry name" value="DSRM"/>
    <property type="match status" value="2"/>
</dbReference>
<dbReference type="SMART" id="SM00490">
    <property type="entry name" value="HELICc"/>
    <property type="match status" value="1"/>
</dbReference>
<dbReference type="SMART" id="SM00949">
    <property type="entry name" value="PAZ"/>
    <property type="match status" value="1"/>
</dbReference>
<dbReference type="SMART" id="SM00535">
    <property type="entry name" value="RIBOc"/>
    <property type="match status" value="2"/>
</dbReference>
<dbReference type="SUPFAM" id="SSF54768">
    <property type="entry name" value="dsRNA-binding domain-like"/>
    <property type="match status" value="2"/>
</dbReference>
<dbReference type="SUPFAM" id="SSF52540">
    <property type="entry name" value="P-loop containing nucleoside triphosphate hydrolases"/>
    <property type="match status" value="1"/>
</dbReference>
<dbReference type="SUPFAM" id="SSF101690">
    <property type="entry name" value="PAZ domain"/>
    <property type="match status" value="1"/>
</dbReference>
<dbReference type="SUPFAM" id="SSF69065">
    <property type="entry name" value="RNase III domain-like"/>
    <property type="match status" value="2"/>
</dbReference>
<dbReference type="PROSITE" id="PS51327">
    <property type="entry name" value="DICER_DSRBF"/>
    <property type="match status" value="1"/>
</dbReference>
<dbReference type="PROSITE" id="PS50137">
    <property type="entry name" value="DS_RBD"/>
    <property type="match status" value="1"/>
</dbReference>
<dbReference type="PROSITE" id="PS51192">
    <property type="entry name" value="HELICASE_ATP_BIND_1"/>
    <property type="match status" value="1"/>
</dbReference>
<dbReference type="PROSITE" id="PS51194">
    <property type="entry name" value="HELICASE_CTER"/>
    <property type="match status" value="1"/>
</dbReference>
<dbReference type="PROSITE" id="PS50821">
    <property type="entry name" value="PAZ"/>
    <property type="match status" value="1"/>
</dbReference>
<dbReference type="PROSITE" id="PS00517">
    <property type="entry name" value="RNASE_3_1"/>
    <property type="match status" value="1"/>
</dbReference>
<dbReference type="PROSITE" id="PS50142">
    <property type="entry name" value="RNASE_3_2"/>
    <property type="match status" value="2"/>
</dbReference>
<sequence length="1657" mass="186989">MGDAAAAAPAAAAAGPSSTRGEPKDPRTIARKYQLDLCKRAVEENIIVYLGTGCGKTHIAVLLIYELGHLIRKPSREVCIFLAPTIPLVRQQAVVIASSTDFKVQCYYGNGKNSRDHQEWENDMREFEVLVMTPQILLQSLRHCFIKMNSIALLILDECHHAQPQKRHPYAQIMKEFYNSNSVEKFPRVFGMTASPIIGKGVMPSHSFTEKGGRSPCQPLIFFLPKGGSNKLNYTKCINSLEELLHAKVCSVDNEELESVVASPDMEVYFYGPVNHSNLTTICIKELDSLKLQSERMLRASLCDFKDSQKKLKSLWRLHENIIFCLQELGSFGALQAARTFLSFDGDKLDRREVDLNGSTSSFAHHYLNGATSILSRNKTDGSHAGSFDLEKLEEPFFSNKFSVLINVLSRYGLQENMKCIVFVKRITVARAISNILQNLKCLEFWKCEFLVGCHSGSKNMSRNKMDAIVQRFSSGEVNLLVATSVGEEGLDIQTCCLVVRFDLPETVASFIQSRGRARMTKSKYVVLLERENQSHEKLLNGYIAGESIMNEEIDSRTSNDMFDCLEENIYQVDNTGASISTACSVSLLHCYCDNLPRDMFFTPSPVFFYIDGIEGIICRLILPPNAAFRQADGQPCLSKDEAKRDACLKACVKLHKLGALTDFLLPGPGSRKNKVSVTNNSSNNKVEDDSLREELHEMLIPAVLKPSGLKLDSLSNLHFYYVKFIPIPEDRRYQMFGLFVINPLPVEAETLQVDLHLARGRIVKAGIKHLGKIAFEKEKMMLAHKFQEMCLKILLDRSEFTSPHVKLGNDVTLEINSTFYLLLPIKQKCYGDRFMIDWPAVERCLSSPIFKDPIDVSVHASYSSNESLRLLDGIFSKTDVVGSVVFSPHNNIFFFVDGILDEINAWSEHSGATYAEHFKERFRIELSHPEQPLLKAKQIFNLRNLLHNRLPETTESEGRELLEHFVELPPELCSLKVIGFSKDMGSSLSLLPSLMYRLENLLVAIELKDVMLSSFPEASQISASGILEALTTEKCLERISLERFEVLGDAFLKYVVGRHKFITYEGLDEGQLTRRRSDVVNNSHLYELSIRKKLQVYIRDQQFEPTQFFAPGRPCKVVCNTDVEVRLHQMDIHPDNRENCNLRCTRSHHWLHRKVIADVVESLIGAFLVEGGFKAAFAFLHWIGIDVDFNNPALYRVLDSSSINLSLMDYTDIAGLEELIGYKFKHKGLLLQAFVHPSFSQHSGGCYQRLEFLGDAVLEYVITSYLYSTYPDIKPGQITDLRSLAVGNDSLAYAAVEKSIHKHLIKDSNHLTSAISKFEMYVKLSNSEKDLLEEPACPKALGDIVESCIGAVLLDSGFNLNYVWKVMLMLLKPVLTFANMHTNPMRELRELCQCHGFELGLPKPMKADGEYHVKVEVNIKSKIIICTAANRNSKAARKFAAQETLSKLKNYGYKHRNKSLEEILIVARKRESELIGYNEDPIDVEADISVKMKSPHIHEENIPFQNTETSFTRSSKFHNQIIAGSGKHDVNNGRNNQPKLATQSGRLPSEATEKSNKKVYHGDMVHKTARSFLFELCAANYWKPPEFKLCKEEGPSHLRKFTYKVVVEIKGASATLLECHSDGKLQKKAAQEHAAQGALWCLKQLGHLPKEEDVRV</sequence>
<feature type="chain" id="PRO_0000378421" description="Endoribonuclease Dicer homolog 4">
    <location>
        <begin position="1"/>
        <end position="1657"/>
    </location>
</feature>
<feature type="domain" description="Helicase ATP-binding" evidence="5">
    <location>
        <begin position="37"/>
        <end position="214"/>
    </location>
</feature>
<feature type="domain" description="Helicase C-terminal" evidence="6">
    <location>
        <begin position="400"/>
        <end position="567"/>
    </location>
</feature>
<feature type="domain" description="Dicer dsRNA-binding fold" evidence="7">
    <location>
        <begin position="585"/>
        <end position="675"/>
    </location>
</feature>
<feature type="domain" description="PAZ" evidence="2">
    <location>
        <begin position="856"/>
        <end position="978"/>
    </location>
</feature>
<feature type="domain" description="RNase III 1" evidence="3">
    <location>
        <begin position="1010"/>
        <end position="1173"/>
    </location>
</feature>
<feature type="domain" description="RNase III 2" evidence="3">
    <location>
        <begin position="1214"/>
        <end position="1358"/>
    </location>
</feature>
<feature type="domain" description="DRBM 1" evidence="4">
    <location>
        <begin position="1384"/>
        <end position="1451"/>
    </location>
</feature>
<feature type="domain" description="DRBM 2" evidence="4">
    <location>
        <begin position="1569"/>
        <end position="1645"/>
    </location>
</feature>
<feature type="region of interest" description="Disordered" evidence="8">
    <location>
        <begin position="1"/>
        <end position="26"/>
    </location>
</feature>
<feature type="region of interest" description="Disordered" evidence="8">
    <location>
        <begin position="1525"/>
        <end position="1556"/>
    </location>
</feature>
<feature type="short sequence motif" description="DECH box" evidence="1">
    <location>
        <begin position="157"/>
        <end position="160"/>
    </location>
</feature>
<feature type="compositionally biased region" description="Low complexity" evidence="8">
    <location>
        <begin position="1"/>
        <end position="14"/>
    </location>
</feature>
<feature type="compositionally biased region" description="Polar residues" evidence="8">
    <location>
        <begin position="1533"/>
        <end position="1547"/>
    </location>
</feature>
<feature type="binding site" evidence="5">
    <location>
        <begin position="50"/>
        <end position="57"/>
    </location>
    <ligand>
        <name>ATP</name>
        <dbReference type="ChEBI" id="CHEBI:30616"/>
    </ligand>
</feature>
<feature type="binding site" evidence="1">
    <location>
        <position position="1252"/>
    </location>
    <ligand>
        <name>Mg(2+)</name>
        <dbReference type="ChEBI" id="CHEBI:18420"/>
    </ligand>
</feature>
<feature type="binding site" evidence="1">
    <location>
        <position position="1344"/>
    </location>
    <ligand>
        <name>Mg(2+)</name>
        <dbReference type="ChEBI" id="CHEBI:18420"/>
    </ligand>
</feature>
<feature type="binding site" evidence="1">
    <location>
        <position position="1347"/>
    </location>
    <ligand>
        <name>Mg(2+)</name>
        <dbReference type="ChEBI" id="CHEBI:18420"/>
    </ligand>
</feature>
<feature type="site" description="Important for activity" evidence="1">
    <location>
        <position position="1340"/>
    </location>
</feature>
<feature type="splice variant" id="VSP_037580" description="In isoform 2." evidence="11">
    <location>
        <begin position="202"/>
        <end position="227"/>
    </location>
</feature>
<keyword id="KW-0025">Alternative splicing</keyword>
<keyword id="KW-0067">ATP-binding</keyword>
<keyword id="KW-0255">Endonuclease</keyword>
<keyword id="KW-0347">Helicase</keyword>
<keyword id="KW-0378">Hydrolase</keyword>
<keyword id="KW-0460">Magnesium</keyword>
<keyword id="KW-0464">Manganese</keyword>
<keyword id="KW-0479">Metal-binding</keyword>
<keyword id="KW-0540">Nuclease</keyword>
<keyword id="KW-0547">Nucleotide-binding</keyword>
<keyword id="KW-0539">Nucleus</keyword>
<keyword id="KW-1185">Reference proteome</keyword>
<keyword id="KW-0677">Repeat</keyword>
<keyword id="KW-0694">RNA-binding</keyword>
<keyword id="KW-0943">RNA-mediated gene silencing</keyword>
<evidence type="ECO:0000250" key="1"/>
<evidence type="ECO:0000255" key="2">
    <source>
        <dbReference type="PROSITE-ProRule" id="PRU00142"/>
    </source>
</evidence>
<evidence type="ECO:0000255" key="3">
    <source>
        <dbReference type="PROSITE-ProRule" id="PRU00177"/>
    </source>
</evidence>
<evidence type="ECO:0000255" key="4">
    <source>
        <dbReference type="PROSITE-ProRule" id="PRU00266"/>
    </source>
</evidence>
<evidence type="ECO:0000255" key="5">
    <source>
        <dbReference type="PROSITE-ProRule" id="PRU00541"/>
    </source>
</evidence>
<evidence type="ECO:0000255" key="6">
    <source>
        <dbReference type="PROSITE-ProRule" id="PRU00542"/>
    </source>
</evidence>
<evidence type="ECO:0000255" key="7">
    <source>
        <dbReference type="PROSITE-ProRule" id="PRU00657"/>
    </source>
</evidence>
<evidence type="ECO:0000256" key="8">
    <source>
        <dbReference type="SAM" id="MobiDB-lite"/>
    </source>
</evidence>
<evidence type="ECO:0000269" key="9">
    <source>
    </source>
</evidence>
<evidence type="ECO:0000269" key="10">
    <source>
    </source>
</evidence>
<evidence type="ECO:0000303" key="11">
    <source>
    </source>
</evidence>
<evidence type="ECO:0000305" key="12"/>
<organism>
    <name type="scientific">Oryza sativa subsp. japonica</name>
    <name type="common">Rice</name>
    <dbReference type="NCBI Taxonomy" id="39947"/>
    <lineage>
        <taxon>Eukaryota</taxon>
        <taxon>Viridiplantae</taxon>
        <taxon>Streptophyta</taxon>
        <taxon>Embryophyta</taxon>
        <taxon>Tracheophyta</taxon>
        <taxon>Spermatophyta</taxon>
        <taxon>Magnoliopsida</taxon>
        <taxon>Liliopsida</taxon>
        <taxon>Poales</taxon>
        <taxon>Poaceae</taxon>
        <taxon>BOP clade</taxon>
        <taxon>Oryzoideae</taxon>
        <taxon>Oryzeae</taxon>
        <taxon>Oryzinae</taxon>
        <taxon>Oryza</taxon>
        <taxon>Oryza sativa</taxon>
    </lineage>
</organism>
<name>DCL4_ORYSJ</name>
<reference key="1">
    <citation type="journal article" date="2007" name="Plant Cell">
        <title>Oryza sativa dicer-like4 reveals a key role for small interfering RNA silencing in plant development.</title>
        <authorList>
            <person name="Liu B."/>
            <person name="Chen Z."/>
            <person name="Song X."/>
            <person name="Liu C."/>
            <person name="Cui X."/>
            <person name="Zhao X."/>
            <person name="Fang J."/>
            <person name="Xu W."/>
            <person name="Zhang H."/>
            <person name="Wang X."/>
            <person name="Chu C."/>
            <person name="Deng X."/>
            <person name="Xue Y."/>
            <person name="Cao X."/>
        </authorList>
    </citation>
    <scope>NUCLEOTIDE SEQUENCE [MRNA] (ISOFORM 1)</scope>
    <scope>FUNCTION</scope>
    <scope>DISRUPTION PHENOTYPE</scope>
</reference>
<reference key="2">
    <citation type="journal article" date="2007" name="Proc. Natl. Acad. Sci. U.S.A.">
        <title>The small interfering RNA production pathway is required for shoot meristem initiation in rice.</title>
        <authorList>
            <person name="Nagasaki H."/>
            <person name="Itoh J."/>
            <person name="Hayashi K."/>
            <person name="Hibara K."/>
            <person name="Satoh-Nagasawa N."/>
            <person name="Nosaka M."/>
            <person name="Mukouhata M."/>
            <person name="Ashikari M."/>
            <person name="Kitano H."/>
            <person name="Matsuoka M."/>
            <person name="Nagato Y."/>
            <person name="Sato Y."/>
        </authorList>
    </citation>
    <scope>NUCLEOTIDE SEQUENCE [MRNA] (ISOFORM 2)</scope>
    <scope>FUNCTION</scope>
    <scope>TISSUE SPECIFICITY</scope>
    <scope>DISRUPTION PHENOTYPE</scope>
    <source>
        <strain>cv. Nipponbare</strain>
    </source>
</reference>
<reference key="3">
    <citation type="journal article" date="2002" name="Nature">
        <title>Sequence and analysis of rice chromosome 4.</title>
        <authorList>
            <person name="Feng Q."/>
            <person name="Zhang Y."/>
            <person name="Hao P."/>
            <person name="Wang S."/>
            <person name="Fu G."/>
            <person name="Huang Y."/>
            <person name="Li Y."/>
            <person name="Zhu J."/>
            <person name="Liu Y."/>
            <person name="Hu X."/>
            <person name="Jia P."/>
            <person name="Zhang Y."/>
            <person name="Zhao Q."/>
            <person name="Ying K."/>
            <person name="Yu S."/>
            <person name="Tang Y."/>
            <person name="Weng Q."/>
            <person name="Zhang L."/>
            <person name="Lu Y."/>
            <person name="Mu J."/>
            <person name="Lu Y."/>
            <person name="Zhang L.S."/>
            <person name="Yu Z."/>
            <person name="Fan D."/>
            <person name="Liu X."/>
            <person name="Lu T."/>
            <person name="Li C."/>
            <person name="Wu Y."/>
            <person name="Sun T."/>
            <person name="Lei H."/>
            <person name="Li T."/>
            <person name="Hu H."/>
            <person name="Guan J."/>
            <person name="Wu M."/>
            <person name="Zhang R."/>
            <person name="Zhou B."/>
            <person name="Chen Z."/>
            <person name="Chen L."/>
            <person name="Jin Z."/>
            <person name="Wang R."/>
            <person name="Yin H."/>
            <person name="Cai Z."/>
            <person name="Ren S."/>
            <person name="Lv G."/>
            <person name="Gu W."/>
            <person name="Zhu G."/>
            <person name="Tu Y."/>
            <person name="Jia J."/>
            <person name="Zhang Y."/>
            <person name="Chen J."/>
            <person name="Kang H."/>
            <person name="Chen X."/>
            <person name="Shao C."/>
            <person name="Sun Y."/>
            <person name="Hu Q."/>
            <person name="Zhang X."/>
            <person name="Zhang W."/>
            <person name="Wang L."/>
            <person name="Ding C."/>
            <person name="Sheng H."/>
            <person name="Gu J."/>
            <person name="Chen S."/>
            <person name="Ni L."/>
            <person name="Zhu F."/>
            <person name="Chen W."/>
            <person name="Lan L."/>
            <person name="Lai Y."/>
            <person name="Cheng Z."/>
            <person name="Gu M."/>
            <person name="Jiang J."/>
            <person name="Li J."/>
            <person name="Hong G."/>
            <person name="Xue Y."/>
            <person name="Han B."/>
        </authorList>
    </citation>
    <scope>NUCLEOTIDE SEQUENCE [LARGE SCALE GENOMIC DNA]</scope>
    <source>
        <strain>cv. Nipponbare</strain>
    </source>
</reference>
<reference key="4">
    <citation type="journal article" date="2005" name="Nature">
        <title>The map-based sequence of the rice genome.</title>
        <authorList>
            <consortium name="International rice genome sequencing project (IRGSP)"/>
        </authorList>
    </citation>
    <scope>NUCLEOTIDE SEQUENCE [LARGE SCALE GENOMIC DNA]</scope>
    <source>
        <strain>cv. Nipponbare</strain>
    </source>
</reference>
<reference key="5">
    <citation type="journal article" date="2008" name="Nucleic Acids Res.">
        <title>The rice annotation project database (RAP-DB): 2008 update.</title>
        <authorList>
            <consortium name="The rice annotation project (RAP)"/>
        </authorList>
    </citation>
    <scope>GENOME REANNOTATION</scope>
    <source>
        <strain>cv. Nipponbare</strain>
    </source>
</reference>
<reference key="6">
    <citation type="journal article" date="2013" name="Rice">
        <title>Improvement of the Oryza sativa Nipponbare reference genome using next generation sequence and optical map data.</title>
        <authorList>
            <person name="Kawahara Y."/>
            <person name="de la Bastide M."/>
            <person name="Hamilton J.P."/>
            <person name="Kanamori H."/>
            <person name="McCombie W.R."/>
            <person name="Ouyang S."/>
            <person name="Schwartz D.C."/>
            <person name="Tanaka T."/>
            <person name="Wu J."/>
            <person name="Zhou S."/>
            <person name="Childs K.L."/>
            <person name="Davidson R.M."/>
            <person name="Lin H."/>
            <person name="Quesada-Ocampo L."/>
            <person name="Vaillancourt B."/>
            <person name="Sakai H."/>
            <person name="Lee S.S."/>
            <person name="Kim J."/>
            <person name="Numa H."/>
            <person name="Itoh T."/>
            <person name="Buell C.R."/>
            <person name="Matsumoto T."/>
        </authorList>
    </citation>
    <scope>GENOME REANNOTATION</scope>
    <source>
        <strain>cv. Nipponbare</strain>
    </source>
</reference>
<reference key="7">
    <citation type="journal article" date="2003" name="Science">
        <title>Collection, mapping, and annotation of over 28,000 cDNA clones from japonica rice.</title>
        <authorList>
            <consortium name="The rice full-length cDNA consortium"/>
        </authorList>
    </citation>
    <scope>NUCLEOTIDE SEQUENCE [LARGE SCALE MRNA] OF 568-1657</scope>
    <source>
        <strain>cv. Nipponbare</strain>
    </source>
</reference>
<reference key="8">
    <citation type="journal article" date="2008" name="BMC Genomics">
        <title>Genome-wide identification, organization and phylogenetic analysis of dicer-like, argonaute and RNA-dependent RNA polymerase gene families and their expression analysis during reproductive development and stress in rice.</title>
        <authorList>
            <person name="Kapoor M."/>
            <person name="Arora R."/>
            <person name="Lama T."/>
            <person name="Nijhawan A."/>
            <person name="Khurana J.P."/>
            <person name="Tyagi A.K."/>
            <person name="Kapoor S."/>
        </authorList>
    </citation>
    <scope>GENE FAMILY</scope>
    <scope>NOMENCLATURE</scope>
</reference>
<accession>A7LFZ6</accession>
<accession>A0A0P0WCA9</accession>
<accession>A7VMN4</accession>
<accession>B7ECE3</accession>
<accession>Q0JBU5</accession>
<accession>Q7XQ14</accession>
<protein>
    <recommendedName>
        <fullName>Endoribonuclease Dicer homolog 4</fullName>
        <ecNumber>3.1.26.-</ecNumber>
    </recommendedName>
    <alternativeName>
        <fullName>Dicer-like protein 4</fullName>
        <shortName>OsDCL4</shortName>
    </alternativeName>
    <alternativeName>
        <fullName>Protein SHOOT ORGANIZATION 1</fullName>
    </alternativeName>
</protein>
<comment type="function">
    <text evidence="9 10">Involved in the RNA silencing pathway. Cleaves double-stranded RNA to produce small interfering RNAs (siRNAs) which target the selective destruction of complementary RNAs. Required for the production of 21 nucleotide siRNAs. Regulates shoot apical meristem (SAM) initiation and maintenance, leaf polarization and lemma polarity through the trans-acting siRNAS (ta-siRNAs) pathway, which probably modulate the expression of the ARF2, ARF3, ARF4, ARF14 and ARF15 genes. Can process endogenous 21 nucleotide siRNAs derived from an imperfect inverted repeat. May not be involved in microRNAs (miRNAs) production.</text>
</comment>
<comment type="cofactor">
    <cofactor evidence="1">
        <name>Mg(2+)</name>
        <dbReference type="ChEBI" id="CHEBI:18420"/>
    </cofactor>
    <cofactor evidence="1">
        <name>Mn(2+)</name>
        <dbReference type="ChEBI" id="CHEBI:29035"/>
    </cofactor>
</comment>
<comment type="subunit">
    <text evidence="1">May interact with ARGONAUTE1 or PINHEAD through their common PAZ domains.</text>
</comment>
<comment type="subcellular location">
    <subcellularLocation>
        <location evidence="12">Nucleus</location>
    </subcellularLocation>
</comment>
<comment type="alternative products">
    <event type="alternative splicing"/>
    <isoform>
        <id>A7LFZ6-1</id>
        <name>1</name>
        <sequence type="displayed"/>
    </isoform>
    <isoform>
        <id>A7LFZ6-2</id>
        <name>2</name>
        <sequence type="described" ref="VSP_037580"/>
    </isoform>
</comment>
<comment type="tissue specificity">
    <text evidence="9">Expressed in roots, leaf blades, leaf sheaths, shoot apices and spikelets.</text>
</comment>
<comment type="disruption phenotype">
    <text evidence="9 10">Formation of an incomplete shoot apical meristem (SAM), abnormal vegetative development with alteration of adaxial/abaxial polarity in both coleoptiles and the first leaves. Abnormal spikelet morphology with disruption of organ identity and lemma polarity.</text>
</comment>
<comment type="similarity">
    <text evidence="7">Belongs to the helicase family. Dicer subfamily.</text>
</comment>
<comment type="sequence caution" evidence="12">
    <conflict type="erroneous gene model prediction">
        <sequence resource="EMBL-CDS" id="BAF15192"/>
    </conflict>
</comment>
<comment type="sequence caution" evidence="12">
    <conflict type="erroneous initiation">
        <sequence resource="EMBL-CDS" id="BAG90040"/>
    </conflict>
</comment>
<comment type="sequence caution" evidence="12">
    <conflict type="erroneous gene model prediction">
        <sequence resource="EMBL-CDS" id="CAE03362"/>
    </conflict>
</comment>
<gene>
    <name type="primary">DCL4</name>
    <name type="synonym">SHO1</name>
    <name type="ordered locus">Os04g0509300</name>
    <name type="ordered locus">LOC_Os04g43050</name>
    <name type="ORF">OSJNBb0065L13.5</name>
</gene>
<proteinExistence type="evidence at transcript level"/>